<feature type="chain" id="PRO_0000203966" description="Tagatose 1,6-diphosphate aldolase 2">
    <location>
        <begin position="1"/>
        <end position="327"/>
    </location>
</feature>
<name>LACD2_STRP3</name>
<evidence type="ECO:0000305" key="1"/>
<accession>P0DC16</accession>
<accession>Q8K5U9</accession>
<sequence>MTITLTENKRKSMEKLSVDGVISALAFDQRGALKRMMAQHQTKEPTVEQIEELKSLVSEELTPFASSILLDPEYGLPASRVRSEEAGLLLAYEKTGYDATTTSRLPDCLDVWSAKRIKEAGAEAVKFLIYYDIDGGQDVNEQKKAYIERIGSECRAEDIPFYLEILTYDEKIADNASPEFAKVKAHKVNEAMKVFSKERFGVDVLKVEVPVNMKFVEGFADGEILFTKEEAAQAFRDQEASTDLPYIYLSAGVSAKLFQDTLVFAAESGAKFNGVLCGRATWAGSVKVYIEEGPQAAREWLRTEGFKNIDELNKVLDKTASPWTEKM</sequence>
<proteinExistence type="inferred from homology"/>
<dbReference type="EC" id="4.1.2.40"/>
<dbReference type="EMBL" id="AE014074">
    <property type="protein sequence ID" value="AAM80263.1"/>
    <property type="molecule type" value="Genomic_DNA"/>
</dbReference>
<dbReference type="SMR" id="P0DC16"/>
<dbReference type="KEGG" id="spg:SpyM3_1656"/>
<dbReference type="HOGENOM" id="CLU_058971_0_1_9"/>
<dbReference type="UniPathway" id="UPA00704">
    <property type="reaction ID" value="UER00716"/>
</dbReference>
<dbReference type="Proteomes" id="UP000000564">
    <property type="component" value="Chromosome"/>
</dbReference>
<dbReference type="GO" id="GO:0061595">
    <property type="term" value="F:6-deoxy-6-sulfofructose-1-phosphate aldolase activity"/>
    <property type="evidence" value="ECO:0007669"/>
    <property type="project" value="TreeGrafter"/>
</dbReference>
<dbReference type="GO" id="GO:0009024">
    <property type="term" value="F:tagatose-6-phosphate kinase activity"/>
    <property type="evidence" value="ECO:0007669"/>
    <property type="project" value="InterPro"/>
</dbReference>
<dbReference type="GO" id="GO:0009025">
    <property type="term" value="F:tagatose-bisphosphate aldolase activity"/>
    <property type="evidence" value="ECO:0007669"/>
    <property type="project" value="UniProtKB-UniRule"/>
</dbReference>
<dbReference type="GO" id="GO:1902777">
    <property type="term" value="P:6-sulfoquinovose(1-) catabolic process"/>
    <property type="evidence" value="ECO:0007669"/>
    <property type="project" value="TreeGrafter"/>
</dbReference>
<dbReference type="GO" id="GO:2001059">
    <property type="term" value="P:D-tagatose 6-phosphate catabolic process"/>
    <property type="evidence" value="ECO:0007669"/>
    <property type="project" value="UniProtKB-UniRule"/>
</dbReference>
<dbReference type="GO" id="GO:0019512">
    <property type="term" value="P:lactose catabolic process via tagatose-6-phosphate"/>
    <property type="evidence" value="ECO:0007669"/>
    <property type="project" value="InterPro"/>
</dbReference>
<dbReference type="FunFam" id="3.20.20.70:FF:000137">
    <property type="entry name" value="Tagatose 1,6-diphosphate aldolase 2"/>
    <property type="match status" value="1"/>
</dbReference>
<dbReference type="Gene3D" id="3.20.20.70">
    <property type="entry name" value="Aldolase class I"/>
    <property type="match status" value="1"/>
</dbReference>
<dbReference type="HAMAP" id="MF_00734">
    <property type="entry name" value="LacD"/>
    <property type="match status" value="1"/>
</dbReference>
<dbReference type="InterPro" id="IPR013785">
    <property type="entry name" value="Aldolase_TIM"/>
</dbReference>
<dbReference type="InterPro" id="IPR002915">
    <property type="entry name" value="DeoC/FbaB/LacD_aldolase"/>
</dbReference>
<dbReference type="InterPro" id="IPR050552">
    <property type="entry name" value="LacD_aldolase"/>
</dbReference>
<dbReference type="InterPro" id="IPR005927">
    <property type="entry name" value="Tag_1.6-dipho_adolase"/>
</dbReference>
<dbReference type="NCBIfam" id="TIGR01232">
    <property type="entry name" value="lacD"/>
    <property type="match status" value="1"/>
</dbReference>
<dbReference type="NCBIfam" id="NF003180">
    <property type="entry name" value="PRK04161.1"/>
    <property type="match status" value="1"/>
</dbReference>
<dbReference type="NCBIfam" id="NF009065">
    <property type="entry name" value="PRK12399.1"/>
    <property type="match status" value="1"/>
</dbReference>
<dbReference type="NCBIfam" id="NF009498">
    <property type="entry name" value="PRK12858.1"/>
    <property type="match status" value="1"/>
</dbReference>
<dbReference type="PANTHER" id="PTHR39340">
    <property type="entry name" value="SULFOFRUCTOSEPHOSPHATE ALDOLASE"/>
    <property type="match status" value="1"/>
</dbReference>
<dbReference type="PANTHER" id="PTHR39340:SF1">
    <property type="entry name" value="SULFOFRUCTOSEPHOSPHATE ALDOLASE"/>
    <property type="match status" value="1"/>
</dbReference>
<dbReference type="Pfam" id="PF01791">
    <property type="entry name" value="DeoC"/>
    <property type="match status" value="1"/>
</dbReference>
<dbReference type="SMART" id="SM01133">
    <property type="entry name" value="DeoC"/>
    <property type="match status" value="1"/>
</dbReference>
<dbReference type="SUPFAM" id="SSF51569">
    <property type="entry name" value="Aldolase"/>
    <property type="match status" value="1"/>
</dbReference>
<keyword id="KW-0423">Lactose metabolism</keyword>
<keyword id="KW-0456">Lyase</keyword>
<protein>
    <recommendedName>
        <fullName>Tagatose 1,6-diphosphate aldolase 2</fullName>
        <ecNumber>4.1.2.40</ecNumber>
    </recommendedName>
    <alternativeName>
        <fullName>D-tagatose-1,6-bisphosphate aldolase 2</fullName>
    </alternativeName>
    <alternativeName>
        <fullName>Tagatose-bisphosphate aldolase 2</fullName>
    </alternativeName>
</protein>
<gene>
    <name type="primary">lacD2</name>
    <name type="synonym">lacD.2</name>
    <name type="ordered locus">SpyM3_1656</name>
</gene>
<reference key="1">
    <citation type="journal article" date="2002" name="Proc. Natl. Acad. Sci. U.S.A.">
        <title>Genome sequence of a serotype M3 strain of group A Streptococcus: phage-encoded toxins, the high-virulence phenotype, and clone emergence.</title>
        <authorList>
            <person name="Beres S.B."/>
            <person name="Sylva G.L."/>
            <person name="Barbian K.D."/>
            <person name="Lei B."/>
            <person name="Hoff J.S."/>
            <person name="Mammarella N.D."/>
            <person name="Liu M.-Y."/>
            <person name="Smoot J.C."/>
            <person name="Porcella S.F."/>
            <person name="Parkins L.D."/>
            <person name="Campbell D.S."/>
            <person name="Smith T.M."/>
            <person name="McCormick J.K."/>
            <person name="Leung D.Y.M."/>
            <person name="Schlievert P.M."/>
            <person name="Musser J.M."/>
        </authorList>
    </citation>
    <scope>NUCLEOTIDE SEQUENCE [LARGE SCALE GENOMIC DNA]</scope>
    <source>
        <strain>ATCC BAA-595 / MGAS315</strain>
    </source>
</reference>
<organism>
    <name type="scientific">Streptococcus pyogenes serotype M3 (strain ATCC BAA-595 / MGAS315)</name>
    <dbReference type="NCBI Taxonomy" id="198466"/>
    <lineage>
        <taxon>Bacteria</taxon>
        <taxon>Bacillati</taxon>
        <taxon>Bacillota</taxon>
        <taxon>Bacilli</taxon>
        <taxon>Lactobacillales</taxon>
        <taxon>Streptococcaceae</taxon>
        <taxon>Streptococcus</taxon>
    </lineage>
</organism>
<comment type="catalytic activity">
    <reaction>
        <text>D-tagatofuranose 1,6-bisphosphate = D-glyceraldehyde 3-phosphate + dihydroxyacetone phosphate</text>
        <dbReference type="Rhea" id="RHEA:22948"/>
        <dbReference type="ChEBI" id="CHEBI:57642"/>
        <dbReference type="ChEBI" id="CHEBI:58694"/>
        <dbReference type="ChEBI" id="CHEBI:59776"/>
        <dbReference type="EC" id="4.1.2.40"/>
    </reaction>
</comment>
<comment type="pathway">
    <text>Carbohydrate metabolism; D-tagatose 6-phosphate degradation; D-glyceraldehyde 3-phosphate and glycerone phosphate from D-tagatose 6-phosphate: step 2/2.</text>
</comment>
<comment type="similarity">
    <text evidence="1">Belongs to the aldolase LacD family.</text>
</comment>